<reference key="1">
    <citation type="journal article" date="2008" name="Genome Biol.">
        <title>The complete genome, comparative and functional analysis of Stenotrophomonas maltophilia reveals an organism heavily shielded by drug resistance determinants.</title>
        <authorList>
            <person name="Crossman L.C."/>
            <person name="Gould V.C."/>
            <person name="Dow J.M."/>
            <person name="Vernikos G.S."/>
            <person name="Okazaki A."/>
            <person name="Sebaihia M."/>
            <person name="Saunders D."/>
            <person name="Arrowsmith C."/>
            <person name="Carver T."/>
            <person name="Peters N."/>
            <person name="Adlem E."/>
            <person name="Kerhornou A."/>
            <person name="Lord A."/>
            <person name="Murphy L."/>
            <person name="Seeger K."/>
            <person name="Squares R."/>
            <person name="Rutter S."/>
            <person name="Quail M.A."/>
            <person name="Rajandream M.A."/>
            <person name="Harris D."/>
            <person name="Churcher C."/>
            <person name="Bentley S.D."/>
            <person name="Parkhill J."/>
            <person name="Thomson N.R."/>
            <person name="Avison M.B."/>
        </authorList>
    </citation>
    <scope>NUCLEOTIDE SEQUENCE [LARGE SCALE GENOMIC DNA]</scope>
    <source>
        <strain>K279a</strain>
    </source>
</reference>
<organism>
    <name type="scientific">Stenotrophomonas maltophilia (strain K279a)</name>
    <dbReference type="NCBI Taxonomy" id="522373"/>
    <lineage>
        <taxon>Bacteria</taxon>
        <taxon>Pseudomonadati</taxon>
        <taxon>Pseudomonadota</taxon>
        <taxon>Gammaproteobacteria</taxon>
        <taxon>Lysobacterales</taxon>
        <taxon>Lysobacteraceae</taxon>
        <taxon>Stenotrophomonas</taxon>
        <taxon>Stenotrophomonas maltophilia group</taxon>
    </lineage>
</organism>
<feature type="chain" id="PRO_0000386287" description="GTPase Obg">
    <location>
        <begin position="1"/>
        <end position="350"/>
    </location>
</feature>
<feature type="domain" description="Obg" evidence="2">
    <location>
        <begin position="1"/>
        <end position="159"/>
    </location>
</feature>
<feature type="domain" description="OBG-type G" evidence="1">
    <location>
        <begin position="160"/>
        <end position="337"/>
    </location>
</feature>
<feature type="region of interest" description="Disordered" evidence="3">
    <location>
        <begin position="126"/>
        <end position="147"/>
    </location>
</feature>
<feature type="binding site" evidence="1">
    <location>
        <begin position="166"/>
        <end position="173"/>
    </location>
    <ligand>
        <name>GTP</name>
        <dbReference type="ChEBI" id="CHEBI:37565"/>
    </ligand>
</feature>
<feature type="binding site" evidence="1">
    <location>
        <position position="173"/>
    </location>
    <ligand>
        <name>Mg(2+)</name>
        <dbReference type="ChEBI" id="CHEBI:18420"/>
    </ligand>
</feature>
<feature type="binding site" evidence="1">
    <location>
        <begin position="191"/>
        <end position="195"/>
    </location>
    <ligand>
        <name>GTP</name>
        <dbReference type="ChEBI" id="CHEBI:37565"/>
    </ligand>
</feature>
<feature type="binding site" evidence="1">
    <location>
        <position position="193"/>
    </location>
    <ligand>
        <name>Mg(2+)</name>
        <dbReference type="ChEBI" id="CHEBI:18420"/>
    </ligand>
</feature>
<feature type="binding site" evidence="1">
    <location>
        <begin position="213"/>
        <end position="216"/>
    </location>
    <ligand>
        <name>GTP</name>
        <dbReference type="ChEBI" id="CHEBI:37565"/>
    </ligand>
</feature>
<feature type="binding site" evidence="1">
    <location>
        <begin position="287"/>
        <end position="290"/>
    </location>
    <ligand>
        <name>GTP</name>
        <dbReference type="ChEBI" id="CHEBI:37565"/>
    </ligand>
</feature>
<feature type="binding site" evidence="1">
    <location>
        <begin position="318"/>
        <end position="320"/>
    </location>
    <ligand>
        <name>GTP</name>
        <dbReference type="ChEBI" id="CHEBI:37565"/>
    </ligand>
</feature>
<keyword id="KW-0963">Cytoplasm</keyword>
<keyword id="KW-0342">GTP-binding</keyword>
<keyword id="KW-0378">Hydrolase</keyword>
<keyword id="KW-0460">Magnesium</keyword>
<keyword id="KW-0479">Metal-binding</keyword>
<keyword id="KW-0547">Nucleotide-binding</keyword>
<keyword id="KW-1185">Reference proteome</keyword>
<proteinExistence type="inferred from homology"/>
<dbReference type="EC" id="3.6.5.-" evidence="1"/>
<dbReference type="EMBL" id="AM743169">
    <property type="protein sequence ID" value="CAQ44830.1"/>
    <property type="molecule type" value="Genomic_DNA"/>
</dbReference>
<dbReference type="SMR" id="B2FTD3"/>
<dbReference type="EnsemblBacteria" id="CAQ44830">
    <property type="protein sequence ID" value="CAQ44830"/>
    <property type="gene ID" value="Smlt1280"/>
</dbReference>
<dbReference type="KEGG" id="sml:Smlt1280"/>
<dbReference type="PATRIC" id="fig|522373.3.peg.1240"/>
<dbReference type="eggNOG" id="COG0536">
    <property type="taxonomic scope" value="Bacteria"/>
</dbReference>
<dbReference type="HOGENOM" id="CLU_011747_2_0_6"/>
<dbReference type="Proteomes" id="UP000008840">
    <property type="component" value="Chromosome"/>
</dbReference>
<dbReference type="GO" id="GO:0005737">
    <property type="term" value="C:cytoplasm"/>
    <property type="evidence" value="ECO:0007669"/>
    <property type="project" value="UniProtKB-SubCell"/>
</dbReference>
<dbReference type="GO" id="GO:0005525">
    <property type="term" value="F:GTP binding"/>
    <property type="evidence" value="ECO:0007669"/>
    <property type="project" value="UniProtKB-UniRule"/>
</dbReference>
<dbReference type="GO" id="GO:0003924">
    <property type="term" value="F:GTPase activity"/>
    <property type="evidence" value="ECO:0007669"/>
    <property type="project" value="UniProtKB-UniRule"/>
</dbReference>
<dbReference type="GO" id="GO:0000287">
    <property type="term" value="F:magnesium ion binding"/>
    <property type="evidence" value="ECO:0007669"/>
    <property type="project" value="InterPro"/>
</dbReference>
<dbReference type="GO" id="GO:0042254">
    <property type="term" value="P:ribosome biogenesis"/>
    <property type="evidence" value="ECO:0007669"/>
    <property type="project" value="UniProtKB-UniRule"/>
</dbReference>
<dbReference type="CDD" id="cd01898">
    <property type="entry name" value="Obg"/>
    <property type="match status" value="1"/>
</dbReference>
<dbReference type="FunFam" id="2.70.210.12:FF:000001">
    <property type="entry name" value="GTPase Obg"/>
    <property type="match status" value="1"/>
</dbReference>
<dbReference type="Gene3D" id="2.70.210.12">
    <property type="entry name" value="GTP1/OBG domain"/>
    <property type="match status" value="1"/>
</dbReference>
<dbReference type="Gene3D" id="3.40.50.300">
    <property type="entry name" value="P-loop containing nucleotide triphosphate hydrolases"/>
    <property type="match status" value="1"/>
</dbReference>
<dbReference type="HAMAP" id="MF_01454">
    <property type="entry name" value="GTPase_Obg"/>
    <property type="match status" value="1"/>
</dbReference>
<dbReference type="InterPro" id="IPR031167">
    <property type="entry name" value="G_OBG"/>
</dbReference>
<dbReference type="InterPro" id="IPR006073">
    <property type="entry name" value="GTP-bd"/>
</dbReference>
<dbReference type="InterPro" id="IPR014100">
    <property type="entry name" value="GTP-bd_Obg/CgtA"/>
</dbReference>
<dbReference type="InterPro" id="IPR006074">
    <property type="entry name" value="GTP1-OBG_CS"/>
</dbReference>
<dbReference type="InterPro" id="IPR006169">
    <property type="entry name" value="GTP1_OBG_dom"/>
</dbReference>
<dbReference type="InterPro" id="IPR036726">
    <property type="entry name" value="GTP1_OBG_dom_sf"/>
</dbReference>
<dbReference type="InterPro" id="IPR045086">
    <property type="entry name" value="OBG_GTPase"/>
</dbReference>
<dbReference type="InterPro" id="IPR027417">
    <property type="entry name" value="P-loop_NTPase"/>
</dbReference>
<dbReference type="NCBIfam" id="TIGR02729">
    <property type="entry name" value="Obg_CgtA"/>
    <property type="match status" value="1"/>
</dbReference>
<dbReference type="NCBIfam" id="NF008955">
    <property type="entry name" value="PRK12297.1"/>
    <property type="match status" value="1"/>
</dbReference>
<dbReference type="NCBIfam" id="NF008956">
    <property type="entry name" value="PRK12299.1"/>
    <property type="match status" value="1"/>
</dbReference>
<dbReference type="PANTHER" id="PTHR11702">
    <property type="entry name" value="DEVELOPMENTALLY REGULATED GTP-BINDING PROTEIN-RELATED"/>
    <property type="match status" value="1"/>
</dbReference>
<dbReference type="PANTHER" id="PTHR11702:SF31">
    <property type="entry name" value="MITOCHONDRIAL RIBOSOME-ASSOCIATED GTPASE 2"/>
    <property type="match status" value="1"/>
</dbReference>
<dbReference type="Pfam" id="PF01018">
    <property type="entry name" value="GTP1_OBG"/>
    <property type="match status" value="1"/>
</dbReference>
<dbReference type="Pfam" id="PF01926">
    <property type="entry name" value="MMR_HSR1"/>
    <property type="match status" value="1"/>
</dbReference>
<dbReference type="PIRSF" id="PIRSF002401">
    <property type="entry name" value="GTP_bd_Obg/CgtA"/>
    <property type="match status" value="1"/>
</dbReference>
<dbReference type="PRINTS" id="PR00326">
    <property type="entry name" value="GTP1OBG"/>
</dbReference>
<dbReference type="SUPFAM" id="SSF82051">
    <property type="entry name" value="Obg GTP-binding protein N-terminal domain"/>
    <property type="match status" value="1"/>
</dbReference>
<dbReference type="SUPFAM" id="SSF52540">
    <property type="entry name" value="P-loop containing nucleoside triphosphate hydrolases"/>
    <property type="match status" value="1"/>
</dbReference>
<dbReference type="PROSITE" id="PS51710">
    <property type="entry name" value="G_OBG"/>
    <property type="match status" value="1"/>
</dbReference>
<dbReference type="PROSITE" id="PS00905">
    <property type="entry name" value="GTP1_OBG"/>
    <property type="match status" value="1"/>
</dbReference>
<dbReference type="PROSITE" id="PS51883">
    <property type="entry name" value="OBG"/>
    <property type="match status" value="1"/>
</dbReference>
<sequence>MKLVDEAEIEVFAGNGGNGCIGFRREKFIPLGGPDGGDGGAGGSVYIRADENLNTLVDFRHDRIFKAQRGENGMGRQAYGKGGEDLTITVPVGTVVINVATDEVIGDLTQHGDRLLVAKGGRGGLGNMHFKSSTNRSPRQALPGEPGEERTLKLELKLLADVGLLGFPNAGKSTLIRAVSAATPKVADYPFTTLYPNLGVVKVENYRSFVIADIPGLIEGAADGAGLGAQFLRHLQRTRLLLHLVDISPMEGGVEGISPVEQVRAIERELEKHDPELLRKPRWLVLNKADLMFEDEAKAAAEQIVAELGWKEPWFLVSALGREGTFPIMSRIMAFFDRQKEEEQEARNAQ</sequence>
<protein>
    <recommendedName>
        <fullName evidence="1">GTPase Obg</fullName>
        <ecNumber evidence="1">3.6.5.-</ecNumber>
    </recommendedName>
    <alternativeName>
        <fullName evidence="1">GTP-binding protein Obg</fullName>
    </alternativeName>
</protein>
<gene>
    <name evidence="1" type="primary">obg</name>
    <name type="ordered locus">Smlt1280</name>
</gene>
<comment type="function">
    <text evidence="1">An essential GTPase which binds GTP, GDP and possibly (p)ppGpp with moderate affinity, with high nucleotide exchange rates and a fairly low GTP hydrolysis rate. Plays a role in control of the cell cycle, stress response, ribosome biogenesis and in those bacteria that undergo differentiation, in morphogenesis control.</text>
</comment>
<comment type="cofactor">
    <cofactor evidence="1">
        <name>Mg(2+)</name>
        <dbReference type="ChEBI" id="CHEBI:18420"/>
    </cofactor>
</comment>
<comment type="subunit">
    <text evidence="1">Monomer.</text>
</comment>
<comment type="subcellular location">
    <subcellularLocation>
        <location evidence="1">Cytoplasm</location>
    </subcellularLocation>
</comment>
<comment type="similarity">
    <text evidence="1">Belongs to the TRAFAC class OBG-HflX-like GTPase superfamily. OBG GTPase family.</text>
</comment>
<evidence type="ECO:0000255" key="1">
    <source>
        <dbReference type="HAMAP-Rule" id="MF_01454"/>
    </source>
</evidence>
<evidence type="ECO:0000255" key="2">
    <source>
        <dbReference type="PROSITE-ProRule" id="PRU01231"/>
    </source>
</evidence>
<evidence type="ECO:0000256" key="3">
    <source>
        <dbReference type="SAM" id="MobiDB-lite"/>
    </source>
</evidence>
<name>OBG_STRMK</name>
<accession>B2FTD3</accession>